<accession>Q7NTF9</accession>
<name>LIPA_CHRVO</name>
<feature type="chain" id="PRO_0000102307" description="Lipoyl synthase">
    <location>
        <begin position="1"/>
        <end position="315"/>
    </location>
</feature>
<feature type="domain" description="Radical SAM core" evidence="2">
    <location>
        <begin position="75"/>
        <end position="292"/>
    </location>
</feature>
<feature type="binding site" evidence="1">
    <location>
        <position position="63"/>
    </location>
    <ligand>
        <name>[4Fe-4S] cluster</name>
        <dbReference type="ChEBI" id="CHEBI:49883"/>
        <label>1</label>
    </ligand>
</feature>
<feature type="binding site" evidence="1">
    <location>
        <position position="68"/>
    </location>
    <ligand>
        <name>[4Fe-4S] cluster</name>
        <dbReference type="ChEBI" id="CHEBI:49883"/>
        <label>1</label>
    </ligand>
</feature>
<feature type="binding site" evidence="1">
    <location>
        <position position="74"/>
    </location>
    <ligand>
        <name>[4Fe-4S] cluster</name>
        <dbReference type="ChEBI" id="CHEBI:49883"/>
        <label>1</label>
    </ligand>
</feature>
<feature type="binding site" evidence="1">
    <location>
        <position position="89"/>
    </location>
    <ligand>
        <name>[4Fe-4S] cluster</name>
        <dbReference type="ChEBI" id="CHEBI:49883"/>
        <label>2</label>
        <note>4Fe-4S-S-AdoMet</note>
    </ligand>
</feature>
<feature type="binding site" evidence="1">
    <location>
        <position position="93"/>
    </location>
    <ligand>
        <name>[4Fe-4S] cluster</name>
        <dbReference type="ChEBI" id="CHEBI:49883"/>
        <label>2</label>
        <note>4Fe-4S-S-AdoMet</note>
    </ligand>
</feature>
<feature type="binding site" evidence="1">
    <location>
        <position position="96"/>
    </location>
    <ligand>
        <name>[4Fe-4S] cluster</name>
        <dbReference type="ChEBI" id="CHEBI:49883"/>
        <label>2</label>
        <note>4Fe-4S-S-AdoMet</note>
    </ligand>
</feature>
<feature type="binding site" evidence="1">
    <location>
        <position position="303"/>
    </location>
    <ligand>
        <name>[4Fe-4S] cluster</name>
        <dbReference type="ChEBI" id="CHEBI:49883"/>
        <label>1</label>
    </ligand>
</feature>
<protein>
    <recommendedName>
        <fullName evidence="1">Lipoyl synthase</fullName>
        <ecNumber evidence="1">2.8.1.8</ecNumber>
    </recommendedName>
    <alternativeName>
        <fullName evidence="1">Lip-syn</fullName>
        <shortName evidence="1">LS</shortName>
    </alternativeName>
    <alternativeName>
        <fullName evidence="1">Lipoate synthase</fullName>
    </alternativeName>
    <alternativeName>
        <fullName evidence="1">Lipoic acid synthase</fullName>
    </alternativeName>
    <alternativeName>
        <fullName evidence="1">Sulfur insertion protein LipA</fullName>
    </alternativeName>
</protein>
<reference key="1">
    <citation type="journal article" date="2003" name="Proc. Natl. Acad. Sci. U.S.A.">
        <title>The complete genome sequence of Chromobacterium violaceum reveals remarkable and exploitable bacterial adaptability.</title>
        <authorList>
            <person name="Vasconcelos A.T.R."/>
            <person name="de Almeida D.F."/>
            <person name="Hungria M."/>
            <person name="Guimaraes C.T."/>
            <person name="Antonio R.V."/>
            <person name="Almeida F.C."/>
            <person name="de Almeida L.G.P."/>
            <person name="de Almeida R."/>
            <person name="Alves-Gomes J.A."/>
            <person name="Andrade E.M."/>
            <person name="Araripe J."/>
            <person name="de Araujo M.F.F."/>
            <person name="Astolfi-Filho S."/>
            <person name="Azevedo V."/>
            <person name="Baptista A.J."/>
            <person name="Bataus L.A.M."/>
            <person name="Batista J.S."/>
            <person name="Belo A."/>
            <person name="van den Berg C."/>
            <person name="Bogo M."/>
            <person name="Bonatto S."/>
            <person name="Bordignon J."/>
            <person name="Brigido M.M."/>
            <person name="Brito C.A."/>
            <person name="Brocchi M."/>
            <person name="Burity H.A."/>
            <person name="Camargo A.A."/>
            <person name="Cardoso D.D.P."/>
            <person name="Carneiro N.P."/>
            <person name="Carraro D.M."/>
            <person name="Carvalho C.M.B."/>
            <person name="Cascardo J.C.M."/>
            <person name="Cavada B.S."/>
            <person name="Chueire L.M.O."/>
            <person name="Creczynski-Pasa T.B."/>
            <person name="Cunha-Junior N.C."/>
            <person name="Fagundes N."/>
            <person name="Falcao C.L."/>
            <person name="Fantinatti F."/>
            <person name="Farias I.P."/>
            <person name="Felipe M.S.S."/>
            <person name="Ferrari L.P."/>
            <person name="Ferro J.A."/>
            <person name="Ferro M.I.T."/>
            <person name="Franco G.R."/>
            <person name="Freitas N.S.A."/>
            <person name="Furlan L.R."/>
            <person name="Gazzinelli R.T."/>
            <person name="Gomes E.A."/>
            <person name="Goncalves P.R."/>
            <person name="Grangeiro T.B."/>
            <person name="Grattapaglia D."/>
            <person name="Grisard E.C."/>
            <person name="Hanna E.S."/>
            <person name="Jardim S.N."/>
            <person name="Laurino J."/>
            <person name="Leoi L.C.T."/>
            <person name="Lima L.F.A."/>
            <person name="Loureiro M.F."/>
            <person name="Lyra M.C.C.P."/>
            <person name="Madeira H.M.F."/>
            <person name="Manfio G.P."/>
            <person name="Maranhao A.Q."/>
            <person name="Martins W.S."/>
            <person name="di Mauro S.M.Z."/>
            <person name="de Medeiros S.R.B."/>
            <person name="Meissner R.V."/>
            <person name="Moreira M.A.M."/>
            <person name="Nascimento F.F."/>
            <person name="Nicolas M.F."/>
            <person name="Oliveira J.G."/>
            <person name="Oliveira S.C."/>
            <person name="Paixao R.F.C."/>
            <person name="Parente J.A."/>
            <person name="Pedrosa F.O."/>
            <person name="Pena S.D.J."/>
            <person name="Pereira J.O."/>
            <person name="Pereira M."/>
            <person name="Pinto L.S.R.C."/>
            <person name="Pinto L.S."/>
            <person name="Porto J.I.R."/>
            <person name="Potrich D.P."/>
            <person name="Ramalho-Neto C.E."/>
            <person name="Reis A.M.M."/>
            <person name="Rigo L.U."/>
            <person name="Rondinelli E."/>
            <person name="Santos E.B.P."/>
            <person name="Santos F.R."/>
            <person name="Schneider M.P.C."/>
            <person name="Seuanez H.N."/>
            <person name="Silva A.M.R."/>
            <person name="da Silva A.L.C."/>
            <person name="Silva D.W."/>
            <person name="Silva R."/>
            <person name="Simoes I.C."/>
            <person name="Simon D."/>
            <person name="Soares C.M.A."/>
            <person name="Soares R.B.A."/>
            <person name="Souza E.M."/>
            <person name="Souza K.R.L."/>
            <person name="Souza R.C."/>
            <person name="Steffens M.B.R."/>
            <person name="Steindel M."/>
            <person name="Teixeira S.R."/>
            <person name="Urmenyi T."/>
            <person name="Vettore A."/>
            <person name="Wassem R."/>
            <person name="Zaha A."/>
            <person name="Simpson A.J.G."/>
        </authorList>
    </citation>
    <scope>NUCLEOTIDE SEQUENCE [LARGE SCALE GENOMIC DNA]</scope>
    <source>
        <strain>ATCC 12472 / DSM 30191 / JCM 1249 / CCUG 213 / NBRC 12614 / NCIMB 9131 / NCTC 9757 / MK</strain>
    </source>
</reference>
<proteinExistence type="inferred from homology"/>
<dbReference type="EC" id="2.8.1.8" evidence="1"/>
<dbReference type="EMBL" id="AE016825">
    <property type="protein sequence ID" value="AAQ60765.1"/>
    <property type="molecule type" value="Genomic_DNA"/>
</dbReference>
<dbReference type="RefSeq" id="WP_011136644.1">
    <property type="nucleotide sequence ID" value="NC_005085.1"/>
</dbReference>
<dbReference type="SMR" id="Q7NTF9"/>
<dbReference type="STRING" id="243365.CV_3097"/>
<dbReference type="GeneID" id="66368808"/>
<dbReference type="KEGG" id="cvi:CV_3097"/>
<dbReference type="eggNOG" id="COG0320">
    <property type="taxonomic scope" value="Bacteria"/>
</dbReference>
<dbReference type="HOGENOM" id="CLU_033144_2_1_4"/>
<dbReference type="OrthoDB" id="9787898at2"/>
<dbReference type="UniPathway" id="UPA00538">
    <property type="reaction ID" value="UER00593"/>
</dbReference>
<dbReference type="Proteomes" id="UP000001424">
    <property type="component" value="Chromosome"/>
</dbReference>
<dbReference type="GO" id="GO:0005737">
    <property type="term" value="C:cytoplasm"/>
    <property type="evidence" value="ECO:0007669"/>
    <property type="project" value="UniProtKB-SubCell"/>
</dbReference>
<dbReference type="GO" id="GO:0051539">
    <property type="term" value="F:4 iron, 4 sulfur cluster binding"/>
    <property type="evidence" value="ECO:0007669"/>
    <property type="project" value="UniProtKB-UniRule"/>
</dbReference>
<dbReference type="GO" id="GO:0016992">
    <property type="term" value="F:lipoate synthase activity"/>
    <property type="evidence" value="ECO:0007669"/>
    <property type="project" value="UniProtKB-UniRule"/>
</dbReference>
<dbReference type="GO" id="GO:0046872">
    <property type="term" value="F:metal ion binding"/>
    <property type="evidence" value="ECO:0007669"/>
    <property type="project" value="UniProtKB-KW"/>
</dbReference>
<dbReference type="CDD" id="cd01335">
    <property type="entry name" value="Radical_SAM"/>
    <property type="match status" value="1"/>
</dbReference>
<dbReference type="FunFam" id="3.20.20.70:FF:000023">
    <property type="entry name" value="Lipoyl synthase"/>
    <property type="match status" value="1"/>
</dbReference>
<dbReference type="Gene3D" id="3.20.20.70">
    <property type="entry name" value="Aldolase class I"/>
    <property type="match status" value="1"/>
</dbReference>
<dbReference type="HAMAP" id="MF_00206">
    <property type="entry name" value="Lipoyl_synth"/>
    <property type="match status" value="1"/>
</dbReference>
<dbReference type="InterPro" id="IPR013785">
    <property type="entry name" value="Aldolase_TIM"/>
</dbReference>
<dbReference type="InterPro" id="IPR006638">
    <property type="entry name" value="Elp3/MiaA/NifB-like_rSAM"/>
</dbReference>
<dbReference type="InterPro" id="IPR031691">
    <property type="entry name" value="LIAS_N"/>
</dbReference>
<dbReference type="InterPro" id="IPR003698">
    <property type="entry name" value="Lipoyl_synth"/>
</dbReference>
<dbReference type="InterPro" id="IPR007197">
    <property type="entry name" value="rSAM"/>
</dbReference>
<dbReference type="NCBIfam" id="TIGR00510">
    <property type="entry name" value="lipA"/>
    <property type="match status" value="1"/>
</dbReference>
<dbReference type="NCBIfam" id="NF004019">
    <property type="entry name" value="PRK05481.1"/>
    <property type="match status" value="1"/>
</dbReference>
<dbReference type="NCBIfam" id="NF009544">
    <property type="entry name" value="PRK12928.1"/>
    <property type="match status" value="1"/>
</dbReference>
<dbReference type="PANTHER" id="PTHR10949">
    <property type="entry name" value="LIPOYL SYNTHASE"/>
    <property type="match status" value="1"/>
</dbReference>
<dbReference type="PANTHER" id="PTHR10949:SF0">
    <property type="entry name" value="LIPOYL SYNTHASE, MITOCHONDRIAL"/>
    <property type="match status" value="1"/>
</dbReference>
<dbReference type="Pfam" id="PF16881">
    <property type="entry name" value="LIAS_N"/>
    <property type="match status" value="1"/>
</dbReference>
<dbReference type="Pfam" id="PF04055">
    <property type="entry name" value="Radical_SAM"/>
    <property type="match status" value="1"/>
</dbReference>
<dbReference type="PIRSF" id="PIRSF005963">
    <property type="entry name" value="Lipoyl_synth"/>
    <property type="match status" value="1"/>
</dbReference>
<dbReference type="SFLD" id="SFLDF00271">
    <property type="entry name" value="lipoyl_synthase"/>
    <property type="match status" value="1"/>
</dbReference>
<dbReference type="SFLD" id="SFLDG01058">
    <property type="entry name" value="lipoyl_synthase_like"/>
    <property type="match status" value="1"/>
</dbReference>
<dbReference type="SMART" id="SM00729">
    <property type="entry name" value="Elp3"/>
    <property type="match status" value="1"/>
</dbReference>
<dbReference type="SUPFAM" id="SSF102114">
    <property type="entry name" value="Radical SAM enzymes"/>
    <property type="match status" value="1"/>
</dbReference>
<dbReference type="PROSITE" id="PS51918">
    <property type="entry name" value="RADICAL_SAM"/>
    <property type="match status" value="1"/>
</dbReference>
<sequence>MKPDNQAGVKHKGAAKTARIPIKIVPLDEKLKKPEWIRAKLPNGQRFHEIKQILREQKLHTVCEEATCPNIGECFSKGTATFMIMGDICTRRCPFCDVGHGRPNPLDENEPRHLAESVAAMRLKYVVVTSVDRDDLRDGGAQHFADCINAVREMSPATQIETLVPDFRGRLDIAVDILTQTPPDVMNHNLETVPRLYKQARPGADYAHSLQLLKDYKAKNPNVRTKSGLMVGLGETDEEILEVMRDLRAHNVDMLTIGQYLQPSDGHLPVLRYVHPDVFKMFEEKAYEMGFVHAAVGAMVRSSYHADVQAHEAGV</sequence>
<organism>
    <name type="scientific">Chromobacterium violaceum (strain ATCC 12472 / DSM 30191 / JCM 1249 / CCUG 213 / NBRC 12614 / NCIMB 9131 / NCTC 9757 / MK)</name>
    <dbReference type="NCBI Taxonomy" id="243365"/>
    <lineage>
        <taxon>Bacteria</taxon>
        <taxon>Pseudomonadati</taxon>
        <taxon>Pseudomonadota</taxon>
        <taxon>Betaproteobacteria</taxon>
        <taxon>Neisseriales</taxon>
        <taxon>Chromobacteriaceae</taxon>
        <taxon>Chromobacterium</taxon>
    </lineage>
</organism>
<evidence type="ECO:0000255" key="1">
    <source>
        <dbReference type="HAMAP-Rule" id="MF_00206"/>
    </source>
</evidence>
<evidence type="ECO:0000255" key="2">
    <source>
        <dbReference type="PROSITE-ProRule" id="PRU01266"/>
    </source>
</evidence>
<comment type="function">
    <text evidence="1">Catalyzes the radical-mediated insertion of two sulfur atoms into the C-6 and C-8 positions of the octanoyl moiety bound to the lipoyl domains of lipoate-dependent enzymes, thereby converting the octanoylated domains into lipoylated derivatives.</text>
</comment>
<comment type="catalytic activity">
    <reaction evidence="1">
        <text>[[Fe-S] cluster scaffold protein carrying a second [4Fe-4S](2+) cluster] + N(6)-octanoyl-L-lysyl-[protein] + 2 oxidized [2Fe-2S]-[ferredoxin] + 2 S-adenosyl-L-methionine + 4 H(+) = [[Fe-S] cluster scaffold protein] + N(6)-[(R)-dihydrolipoyl]-L-lysyl-[protein] + 4 Fe(3+) + 2 hydrogen sulfide + 2 5'-deoxyadenosine + 2 L-methionine + 2 reduced [2Fe-2S]-[ferredoxin]</text>
        <dbReference type="Rhea" id="RHEA:16585"/>
        <dbReference type="Rhea" id="RHEA-COMP:9928"/>
        <dbReference type="Rhea" id="RHEA-COMP:10000"/>
        <dbReference type="Rhea" id="RHEA-COMP:10001"/>
        <dbReference type="Rhea" id="RHEA-COMP:10475"/>
        <dbReference type="Rhea" id="RHEA-COMP:14568"/>
        <dbReference type="Rhea" id="RHEA-COMP:14569"/>
        <dbReference type="ChEBI" id="CHEBI:15378"/>
        <dbReference type="ChEBI" id="CHEBI:17319"/>
        <dbReference type="ChEBI" id="CHEBI:29034"/>
        <dbReference type="ChEBI" id="CHEBI:29919"/>
        <dbReference type="ChEBI" id="CHEBI:33722"/>
        <dbReference type="ChEBI" id="CHEBI:33737"/>
        <dbReference type="ChEBI" id="CHEBI:33738"/>
        <dbReference type="ChEBI" id="CHEBI:57844"/>
        <dbReference type="ChEBI" id="CHEBI:59789"/>
        <dbReference type="ChEBI" id="CHEBI:78809"/>
        <dbReference type="ChEBI" id="CHEBI:83100"/>
        <dbReference type="EC" id="2.8.1.8"/>
    </reaction>
</comment>
<comment type="cofactor">
    <cofactor evidence="1">
        <name>[4Fe-4S] cluster</name>
        <dbReference type="ChEBI" id="CHEBI:49883"/>
    </cofactor>
    <text evidence="1">Binds 2 [4Fe-4S] clusters per subunit. One cluster is coordinated with 3 cysteines and an exchangeable S-adenosyl-L-methionine.</text>
</comment>
<comment type="pathway">
    <text evidence="1">Protein modification; protein lipoylation via endogenous pathway; protein N(6)-(lipoyl)lysine from octanoyl-[acyl-carrier-protein]: step 2/2.</text>
</comment>
<comment type="subcellular location">
    <subcellularLocation>
        <location evidence="1">Cytoplasm</location>
    </subcellularLocation>
</comment>
<comment type="similarity">
    <text evidence="1">Belongs to the radical SAM superfamily. Lipoyl synthase family.</text>
</comment>
<gene>
    <name evidence="1" type="primary">lipA</name>
    <name type="ordered locus">CV_3097</name>
</gene>
<keyword id="KW-0004">4Fe-4S</keyword>
<keyword id="KW-0963">Cytoplasm</keyword>
<keyword id="KW-0408">Iron</keyword>
<keyword id="KW-0411">Iron-sulfur</keyword>
<keyword id="KW-0479">Metal-binding</keyword>
<keyword id="KW-1185">Reference proteome</keyword>
<keyword id="KW-0949">S-adenosyl-L-methionine</keyword>
<keyword id="KW-0808">Transferase</keyword>